<sequence length="78" mass="9074">MHEKLLTLCDCAFEARLIELEMRVSFQEQALTEISEALAETRLIGARNAELMRHLLEELGKVRNTLYEHPIDEPPPHY</sequence>
<feature type="chain" id="PRO_1000195862" description="Protein SlyX homolog">
    <location>
        <begin position="1"/>
        <end position="78"/>
    </location>
</feature>
<protein>
    <recommendedName>
        <fullName evidence="1">Protein SlyX homolog</fullName>
    </recommendedName>
</protein>
<dbReference type="EMBL" id="CP000941">
    <property type="protein sequence ID" value="ACA12211.1"/>
    <property type="molecule type" value="Genomic_DNA"/>
</dbReference>
<dbReference type="RefSeq" id="WP_004087333.1">
    <property type="nucleotide sequence ID" value="NC_010513.1"/>
</dbReference>
<dbReference type="SMR" id="B0U2Y2"/>
<dbReference type="KEGG" id="xfm:Xfasm12_1275"/>
<dbReference type="HOGENOM" id="CLU_180796_4_2_6"/>
<dbReference type="Gene3D" id="1.20.5.300">
    <property type="match status" value="1"/>
</dbReference>
<dbReference type="HAMAP" id="MF_00715">
    <property type="entry name" value="SlyX"/>
    <property type="match status" value="1"/>
</dbReference>
<dbReference type="InterPro" id="IPR007236">
    <property type="entry name" value="SlyX"/>
</dbReference>
<dbReference type="NCBIfam" id="NF002024">
    <property type="entry name" value="PRK00846.1"/>
    <property type="match status" value="1"/>
</dbReference>
<dbReference type="PANTHER" id="PTHR36508">
    <property type="entry name" value="PROTEIN SLYX"/>
    <property type="match status" value="1"/>
</dbReference>
<dbReference type="PANTHER" id="PTHR36508:SF1">
    <property type="entry name" value="PROTEIN SLYX"/>
    <property type="match status" value="1"/>
</dbReference>
<dbReference type="Pfam" id="PF04102">
    <property type="entry name" value="SlyX"/>
    <property type="match status" value="1"/>
</dbReference>
<organism>
    <name type="scientific">Xylella fastidiosa (strain M12)</name>
    <dbReference type="NCBI Taxonomy" id="405440"/>
    <lineage>
        <taxon>Bacteria</taxon>
        <taxon>Pseudomonadati</taxon>
        <taxon>Pseudomonadota</taxon>
        <taxon>Gammaproteobacteria</taxon>
        <taxon>Lysobacterales</taxon>
        <taxon>Lysobacteraceae</taxon>
        <taxon>Xylella</taxon>
    </lineage>
</organism>
<accession>B0U2Y2</accession>
<reference key="1">
    <citation type="journal article" date="2010" name="J. Bacteriol.">
        <title>Whole genome sequences of two Xylella fastidiosa strains (M12 and M23) causing almond leaf scorch disease in California.</title>
        <authorList>
            <person name="Chen J."/>
            <person name="Xie G."/>
            <person name="Han S."/>
            <person name="Chertkov O."/>
            <person name="Sims D."/>
            <person name="Civerolo E.L."/>
        </authorList>
    </citation>
    <scope>NUCLEOTIDE SEQUENCE [LARGE SCALE GENOMIC DNA]</scope>
    <source>
        <strain>M12</strain>
    </source>
</reference>
<name>SLYX_XYLFM</name>
<gene>
    <name evidence="1" type="primary">slyX</name>
    <name type="ordered locus">Xfasm12_1275</name>
</gene>
<proteinExistence type="inferred from homology"/>
<evidence type="ECO:0000255" key="1">
    <source>
        <dbReference type="HAMAP-Rule" id="MF_00715"/>
    </source>
</evidence>
<comment type="similarity">
    <text evidence="1">Belongs to the SlyX family.</text>
</comment>